<proteinExistence type="evidence at protein level"/>
<organism>
    <name type="scientific">Arabidopsis thaliana</name>
    <name type="common">Mouse-ear cress</name>
    <dbReference type="NCBI Taxonomy" id="3702"/>
    <lineage>
        <taxon>Eukaryota</taxon>
        <taxon>Viridiplantae</taxon>
        <taxon>Streptophyta</taxon>
        <taxon>Embryophyta</taxon>
        <taxon>Tracheophyta</taxon>
        <taxon>Spermatophyta</taxon>
        <taxon>Magnoliopsida</taxon>
        <taxon>eudicotyledons</taxon>
        <taxon>Gunneridae</taxon>
        <taxon>Pentapetalae</taxon>
        <taxon>rosids</taxon>
        <taxon>malvids</taxon>
        <taxon>Brassicales</taxon>
        <taxon>Brassicaceae</taxon>
        <taxon>Camelineae</taxon>
        <taxon>Arabidopsis</taxon>
    </lineage>
</organism>
<comment type="function">
    <text evidence="1">Probable transcription factor involved in phosphate signaling in roots.</text>
</comment>
<comment type="interaction">
    <interactant intactId="EBI-2298866">
        <id>Q9FPE8</id>
    </interactant>
    <interactant intactId="EBI-1803261">
        <id>Q8S307</id>
        <label>BZR1</label>
    </interactant>
    <organismsDiffer>false</organismsDiffer>
    <experiments>3</experiments>
</comment>
<comment type="interaction">
    <interactant intactId="EBI-2298866">
        <id>Q9FPE8</id>
    </interactant>
    <interactant intactId="EBI-966009">
        <id>O80340</id>
        <label>ERF4</label>
    </interactant>
    <organismsDiffer>false</organismsDiffer>
    <experiments>3</experiments>
</comment>
<comment type="interaction">
    <interactant intactId="EBI-2298866">
        <id>Q9FPE8</id>
    </interactant>
    <interactant intactId="EBI-3946434">
        <id>Q38828</id>
        <label>IAA10</label>
    </interactant>
    <organismsDiffer>false</organismsDiffer>
    <experiments>3</experiments>
</comment>
<comment type="interaction">
    <interactant intactId="EBI-2298866">
        <id>Q9FPE8</id>
    </interactant>
    <interactant intactId="EBI-632243">
        <id>P93830</id>
        <label>IAA17</label>
    </interactant>
    <organismsDiffer>false</organismsDiffer>
    <experiments>3</experiments>
</comment>
<comment type="interaction">
    <interactant intactId="EBI-2298866">
        <id>Q9FPE8</id>
    </interactant>
    <interactant intactId="EBI-541115">
        <id>Q9FNZ4</id>
        <label>NIMIN-3</label>
    </interactant>
    <organismsDiffer>false</organismsDiffer>
    <experiments>3</experiments>
</comment>
<comment type="subcellular location">
    <subcellularLocation>
        <location evidence="2">Nucleus</location>
    </subcellularLocation>
</comment>
<comment type="sequence caution" evidence="4">
    <conflict type="erroneous initiation">
        <sequence resource="EMBL-CDS" id="AAG50807"/>
    </conflict>
    <text>Truncated N-terminus.</text>
</comment>
<comment type="sequence caution" evidence="4">
    <conflict type="erroneous initiation">
        <sequence resource="EMBL-CDS" id="AAM63125"/>
    </conflict>
    <text>Truncated N-terminus.</text>
</comment>
<accession>Q9FPE8</accession>
<accession>Q8LDM3</accession>
<accession>Q9C6M4</accession>
<dbReference type="EMBL" id="AC079281">
    <property type="protein sequence ID" value="AAG50807.1"/>
    <property type="status" value="ALT_INIT"/>
    <property type="molecule type" value="Genomic_DNA"/>
</dbReference>
<dbReference type="EMBL" id="CP002684">
    <property type="protein sequence ID" value="AEE30641.1"/>
    <property type="molecule type" value="Genomic_DNA"/>
</dbReference>
<dbReference type="EMBL" id="AF326890">
    <property type="protein sequence ID" value="AAG41472.1"/>
    <property type="molecule type" value="mRNA"/>
</dbReference>
<dbReference type="EMBL" id="AF339707">
    <property type="protein sequence ID" value="AAK00389.1"/>
    <property type="molecule type" value="mRNA"/>
</dbReference>
<dbReference type="EMBL" id="AF372906">
    <property type="protein sequence ID" value="AAK49622.1"/>
    <property type="molecule type" value="mRNA"/>
</dbReference>
<dbReference type="EMBL" id="BT002674">
    <property type="protein sequence ID" value="AAO11590.1"/>
    <property type="molecule type" value="mRNA"/>
</dbReference>
<dbReference type="EMBL" id="AY085913">
    <property type="protein sequence ID" value="AAM63125.1"/>
    <property type="status" value="ALT_INIT"/>
    <property type="molecule type" value="mRNA"/>
</dbReference>
<dbReference type="PIR" id="H86385">
    <property type="entry name" value="H86385"/>
</dbReference>
<dbReference type="RefSeq" id="NP_564236.1">
    <property type="nucleotide sequence ID" value="NM_102366.4"/>
</dbReference>
<dbReference type="SMR" id="Q9FPE8"/>
<dbReference type="FunCoup" id="Q9FPE8">
    <property type="interactions" value="225"/>
</dbReference>
<dbReference type="IntAct" id="Q9FPE8">
    <property type="interactions" value="30"/>
</dbReference>
<dbReference type="STRING" id="3702.Q9FPE8"/>
<dbReference type="GlyGen" id="Q9FPE8">
    <property type="glycosylation" value="1 site"/>
</dbReference>
<dbReference type="iPTMnet" id="Q9FPE8"/>
<dbReference type="PaxDb" id="3702-AT1G25550.1"/>
<dbReference type="ProteomicsDB" id="230277"/>
<dbReference type="EnsemblPlants" id="AT1G25550.1">
    <property type="protein sequence ID" value="AT1G25550.1"/>
    <property type="gene ID" value="AT1G25550"/>
</dbReference>
<dbReference type="GeneID" id="839142"/>
<dbReference type="Gramene" id="AT1G25550.1">
    <property type="protein sequence ID" value="AT1G25550.1"/>
    <property type="gene ID" value="AT1G25550"/>
</dbReference>
<dbReference type="KEGG" id="ath:AT1G25550"/>
<dbReference type="Araport" id="AT1G25550"/>
<dbReference type="TAIR" id="AT1G25550">
    <property type="gene designation" value="HHO3"/>
</dbReference>
<dbReference type="eggNOG" id="ENOG502QSXV">
    <property type="taxonomic scope" value="Eukaryota"/>
</dbReference>
<dbReference type="HOGENOM" id="CLU_036551_0_0_1"/>
<dbReference type="InParanoid" id="Q9FPE8"/>
<dbReference type="OMA" id="WVPPQDY"/>
<dbReference type="PhylomeDB" id="Q9FPE8"/>
<dbReference type="PRO" id="PR:Q9FPE8"/>
<dbReference type="Proteomes" id="UP000006548">
    <property type="component" value="Chromosome 1"/>
</dbReference>
<dbReference type="ExpressionAtlas" id="Q9FPE8">
    <property type="expression patterns" value="baseline and differential"/>
</dbReference>
<dbReference type="GO" id="GO:0005634">
    <property type="term" value="C:nucleus"/>
    <property type="evidence" value="ECO:0007669"/>
    <property type="project" value="UniProtKB-SubCell"/>
</dbReference>
<dbReference type="GO" id="GO:0003677">
    <property type="term" value="F:DNA binding"/>
    <property type="evidence" value="ECO:0007669"/>
    <property type="project" value="UniProtKB-KW"/>
</dbReference>
<dbReference type="GO" id="GO:0003700">
    <property type="term" value="F:DNA-binding transcription factor activity"/>
    <property type="evidence" value="ECO:0000314"/>
    <property type="project" value="TAIR"/>
</dbReference>
<dbReference type="GO" id="GO:0071456">
    <property type="term" value="P:cellular response to hypoxia"/>
    <property type="evidence" value="ECO:0007007"/>
    <property type="project" value="TAIR"/>
</dbReference>
<dbReference type="GO" id="GO:0016036">
    <property type="term" value="P:cellular response to phosphate starvation"/>
    <property type="evidence" value="ECO:0000316"/>
    <property type="project" value="TAIR"/>
</dbReference>
<dbReference type="GO" id="GO:0006355">
    <property type="term" value="P:regulation of DNA-templated transcription"/>
    <property type="evidence" value="ECO:0000304"/>
    <property type="project" value="TAIR"/>
</dbReference>
<dbReference type="FunFam" id="1.10.10.60:FF:000002">
    <property type="entry name" value="Myb family transcription factor"/>
    <property type="match status" value="1"/>
</dbReference>
<dbReference type="Gene3D" id="1.10.10.60">
    <property type="entry name" value="Homeodomain-like"/>
    <property type="match status" value="1"/>
</dbReference>
<dbReference type="InterPro" id="IPR009057">
    <property type="entry name" value="Homeodomain-like_sf"/>
</dbReference>
<dbReference type="InterPro" id="IPR044787">
    <property type="entry name" value="HRS1-like"/>
</dbReference>
<dbReference type="InterPro" id="IPR017930">
    <property type="entry name" value="Myb_dom"/>
</dbReference>
<dbReference type="InterPro" id="IPR006447">
    <property type="entry name" value="Myb_dom_plants"/>
</dbReference>
<dbReference type="InterPro" id="IPR001005">
    <property type="entry name" value="SANT/Myb"/>
</dbReference>
<dbReference type="NCBIfam" id="TIGR01557">
    <property type="entry name" value="myb_SHAQKYF"/>
    <property type="match status" value="1"/>
</dbReference>
<dbReference type="PANTHER" id="PTHR31003">
    <property type="entry name" value="MYB FAMILY TRANSCRIPTION FACTOR"/>
    <property type="match status" value="1"/>
</dbReference>
<dbReference type="PANTHER" id="PTHR31003:SF24">
    <property type="entry name" value="TRANSCRIPTION FACTOR HHO3"/>
    <property type="match status" value="1"/>
</dbReference>
<dbReference type="Pfam" id="PF00249">
    <property type="entry name" value="Myb_DNA-binding"/>
    <property type="match status" value="1"/>
</dbReference>
<dbReference type="SUPFAM" id="SSF46689">
    <property type="entry name" value="Homeodomain-like"/>
    <property type="match status" value="1"/>
</dbReference>
<dbReference type="PROSITE" id="PS51294">
    <property type="entry name" value="HTH_MYB"/>
    <property type="match status" value="1"/>
</dbReference>
<protein>
    <recommendedName>
        <fullName evidence="4">Transcription factor HHO3</fullName>
    </recommendedName>
    <alternativeName>
        <fullName evidence="4">MYB-domain transcription factor HHO3</fullName>
    </alternativeName>
    <alternativeName>
        <fullName evidence="4">Protein HRS1 HOMOLOG 3</fullName>
    </alternativeName>
</protein>
<evidence type="ECO:0000250" key="1">
    <source>
        <dbReference type="UniProtKB" id="Q9FX67"/>
    </source>
</evidence>
<evidence type="ECO:0000255" key="2">
    <source>
        <dbReference type="PROSITE-ProRule" id="PRU00625"/>
    </source>
</evidence>
<evidence type="ECO:0000256" key="3">
    <source>
        <dbReference type="SAM" id="MobiDB-lite"/>
    </source>
</evidence>
<evidence type="ECO:0000305" key="4"/>
<evidence type="ECO:0000312" key="5">
    <source>
        <dbReference type="Araport" id="AT1G25550"/>
    </source>
</evidence>
<evidence type="ECO:0000312" key="6">
    <source>
        <dbReference type="EMBL" id="AAG50807.1"/>
    </source>
</evidence>
<name>HHO3_ARATH</name>
<feature type="chain" id="PRO_0000439546" description="Transcription factor HHO3">
    <location>
        <begin position="1"/>
        <end position="344"/>
    </location>
</feature>
<feature type="domain" description="HTH myb-type" evidence="2">
    <location>
        <begin position="206"/>
        <end position="266"/>
    </location>
</feature>
<feature type="DNA-binding region" description="H-T-H motif" evidence="2">
    <location>
        <begin position="237"/>
        <end position="262"/>
    </location>
</feature>
<feature type="region of interest" description="Disordered" evidence="3">
    <location>
        <begin position="90"/>
        <end position="122"/>
    </location>
</feature>
<feature type="region of interest" description="Disordered" evidence="3">
    <location>
        <begin position="156"/>
        <end position="212"/>
    </location>
</feature>
<feature type="region of interest" description="Disordered" evidence="3">
    <location>
        <begin position="306"/>
        <end position="344"/>
    </location>
</feature>
<feature type="compositionally biased region" description="Acidic residues" evidence="3">
    <location>
        <begin position="97"/>
        <end position="106"/>
    </location>
</feature>
<feature type="compositionally biased region" description="Low complexity" evidence="3">
    <location>
        <begin position="178"/>
        <end position="188"/>
    </location>
</feature>
<feature type="compositionally biased region" description="Polar residues" evidence="3">
    <location>
        <begin position="310"/>
        <end position="319"/>
    </location>
</feature>
<feature type="compositionally biased region" description="Low complexity" evidence="3">
    <location>
        <begin position="330"/>
        <end position="344"/>
    </location>
</feature>
<feature type="sequence conflict" description="In Ref. 4; AAM63125." evidence="4" ref="4">
    <original>T</original>
    <variation>S</variation>
    <location>
        <position position="309"/>
    </location>
</feature>
<keyword id="KW-0238">DNA-binding</keyword>
<keyword id="KW-0539">Nucleus</keyword>
<keyword id="KW-1185">Reference proteome</keyword>
<keyword id="KW-0804">Transcription</keyword>
<keyword id="KW-0805">Transcription regulation</keyword>
<reference key="1">
    <citation type="journal article" date="2000" name="Nature">
        <title>Sequence and analysis of chromosome 1 of the plant Arabidopsis thaliana.</title>
        <authorList>
            <person name="Theologis A."/>
            <person name="Ecker J.R."/>
            <person name="Palm C.J."/>
            <person name="Federspiel N.A."/>
            <person name="Kaul S."/>
            <person name="White O."/>
            <person name="Alonso J."/>
            <person name="Altafi H."/>
            <person name="Araujo R."/>
            <person name="Bowman C.L."/>
            <person name="Brooks S.Y."/>
            <person name="Buehler E."/>
            <person name="Chan A."/>
            <person name="Chao Q."/>
            <person name="Chen H."/>
            <person name="Cheuk R.F."/>
            <person name="Chin C.W."/>
            <person name="Chung M.K."/>
            <person name="Conn L."/>
            <person name="Conway A.B."/>
            <person name="Conway A.R."/>
            <person name="Creasy T.H."/>
            <person name="Dewar K."/>
            <person name="Dunn P."/>
            <person name="Etgu P."/>
            <person name="Feldblyum T.V."/>
            <person name="Feng J.-D."/>
            <person name="Fong B."/>
            <person name="Fujii C.Y."/>
            <person name="Gill J.E."/>
            <person name="Goldsmith A.D."/>
            <person name="Haas B."/>
            <person name="Hansen N.F."/>
            <person name="Hughes B."/>
            <person name="Huizar L."/>
            <person name="Hunter J.L."/>
            <person name="Jenkins J."/>
            <person name="Johnson-Hopson C."/>
            <person name="Khan S."/>
            <person name="Khaykin E."/>
            <person name="Kim C.J."/>
            <person name="Koo H.L."/>
            <person name="Kremenetskaia I."/>
            <person name="Kurtz D.B."/>
            <person name="Kwan A."/>
            <person name="Lam B."/>
            <person name="Langin-Hooper S."/>
            <person name="Lee A."/>
            <person name="Lee J.M."/>
            <person name="Lenz C.A."/>
            <person name="Li J.H."/>
            <person name="Li Y.-P."/>
            <person name="Lin X."/>
            <person name="Liu S.X."/>
            <person name="Liu Z.A."/>
            <person name="Luros J.S."/>
            <person name="Maiti R."/>
            <person name="Marziali A."/>
            <person name="Militscher J."/>
            <person name="Miranda M."/>
            <person name="Nguyen M."/>
            <person name="Nierman W.C."/>
            <person name="Osborne B.I."/>
            <person name="Pai G."/>
            <person name="Peterson J."/>
            <person name="Pham P.K."/>
            <person name="Rizzo M."/>
            <person name="Rooney T."/>
            <person name="Rowley D."/>
            <person name="Sakano H."/>
            <person name="Salzberg S.L."/>
            <person name="Schwartz J.R."/>
            <person name="Shinn P."/>
            <person name="Southwick A.M."/>
            <person name="Sun H."/>
            <person name="Tallon L.J."/>
            <person name="Tambunga G."/>
            <person name="Toriumi M.J."/>
            <person name="Town C.D."/>
            <person name="Utterback T."/>
            <person name="Van Aken S."/>
            <person name="Vaysberg M."/>
            <person name="Vysotskaia V.S."/>
            <person name="Walker M."/>
            <person name="Wu D."/>
            <person name="Yu G."/>
            <person name="Fraser C.M."/>
            <person name="Venter J.C."/>
            <person name="Davis R.W."/>
        </authorList>
    </citation>
    <scope>NUCLEOTIDE SEQUENCE [LARGE SCALE GENOMIC DNA]</scope>
    <source>
        <strain>cv. Columbia</strain>
    </source>
</reference>
<reference key="2">
    <citation type="journal article" date="2017" name="Plant J.">
        <title>Araport11: a complete reannotation of the Arabidopsis thaliana reference genome.</title>
        <authorList>
            <person name="Cheng C.Y."/>
            <person name="Krishnakumar V."/>
            <person name="Chan A.P."/>
            <person name="Thibaud-Nissen F."/>
            <person name="Schobel S."/>
            <person name="Town C.D."/>
        </authorList>
    </citation>
    <scope>GENOME REANNOTATION</scope>
    <source>
        <strain>cv. Columbia</strain>
    </source>
</reference>
<reference key="3">
    <citation type="journal article" date="2003" name="Science">
        <title>Empirical analysis of transcriptional activity in the Arabidopsis genome.</title>
        <authorList>
            <person name="Yamada K."/>
            <person name="Lim J."/>
            <person name="Dale J.M."/>
            <person name="Chen H."/>
            <person name="Shinn P."/>
            <person name="Palm C.J."/>
            <person name="Southwick A.M."/>
            <person name="Wu H.C."/>
            <person name="Kim C.J."/>
            <person name="Nguyen M."/>
            <person name="Pham P.K."/>
            <person name="Cheuk R.F."/>
            <person name="Karlin-Newmann G."/>
            <person name="Liu S.X."/>
            <person name="Lam B."/>
            <person name="Sakano H."/>
            <person name="Wu T."/>
            <person name="Yu G."/>
            <person name="Miranda M."/>
            <person name="Quach H.L."/>
            <person name="Tripp M."/>
            <person name="Chang C.H."/>
            <person name="Lee J.M."/>
            <person name="Toriumi M.J."/>
            <person name="Chan M.M."/>
            <person name="Tang C.C."/>
            <person name="Onodera C.S."/>
            <person name="Deng J.M."/>
            <person name="Akiyama K."/>
            <person name="Ansari Y."/>
            <person name="Arakawa T."/>
            <person name="Banh J."/>
            <person name="Banno F."/>
            <person name="Bowser L."/>
            <person name="Brooks S.Y."/>
            <person name="Carninci P."/>
            <person name="Chao Q."/>
            <person name="Choy N."/>
            <person name="Enju A."/>
            <person name="Goldsmith A.D."/>
            <person name="Gurjal M."/>
            <person name="Hansen N.F."/>
            <person name="Hayashizaki Y."/>
            <person name="Johnson-Hopson C."/>
            <person name="Hsuan V.W."/>
            <person name="Iida K."/>
            <person name="Karnes M."/>
            <person name="Khan S."/>
            <person name="Koesema E."/>
            <person name="Ishida J."/>
            <person name="Jiang P.X."/>
            <person name="Jones T."/>
            <person name="Kawai J."/>
            <person name="Kamiya A."/>
            <person name="Meyers C."/>
            <person name="Nakajima M."/>
            <person name="Narusaka M."/>
            <person name="Seki M."/>
            <person name="Sakurai T."/>
            <person name="Satou M."/>
            <person name="Tamse R."/>
            <person name="Vaysberg M."/>
            <person name="Wallender E.K."/>
            <person name="Wong C."/>
            <person name="Yamamura Y."/>
            <person name="Yuan S."/>
            <person name="Shinozaki K."/>
            <person name="Davis R.W."/>
            <person name="Theologis A."/>
            <person name="Ecker J.R."/>
        </authorList>
    </citation>
    <scope>NUCLEOTIDE SEQUENCE [LARGE SCALE MRNA]</scope>
    <source>
        <strain>cv. Columbia</strain>
    </source>
</reference>
<reference key="4">
    <citation type="submission" date="2002-03" db="EMBL/GenBank/DDBJ databases">
        <title>Full-length cDNA from Arabidopsis thaliana.</title>
        <authorList>
            <person name="Brover V.V."/>
            <person name="Troukhan M.E."/>
            <person name="Alexandrov N.A."/>
            <person name="Lu Y.-P."/>
            <person name="Flavell R.B."/>
            <person name="Feldmann K.A."/>
        </authorList>
    </citation>
    <scope>NUCLEOTIDE SEQUENCE [LARGE SCALE MRNA]</scope>
</reference>
<sequence>MMMFKSGDMDYTQKMKRCHEYVEALEEEQKKIQVFQRELPLCLELVTQAIESCRKELSESSEHVGGQSECSERTTSECGGAVFEEFMPIKWSSASSDETDKDEEAEKTEMMTNENNDGDKKKSDWLRSVQLWNQSPDPQPNNKKPMVIEVKRSAGAFQPFQKEKPKAADSQPLIKAITPTSTTTTSSTAETVGGGKEFEEQKQSHSNRKQRRCWSPELHRRFLHALQQLGGSHVATPKQIRDLMKVDGLTNDEVKSHLQKYRLHTRRPATPVVRTGGENPQQRQFMVMEGIWVPSHDTTNNRVYAPVATQPPQSSTSGERSNRGCKSPATSSTTTHTPHLLPLS</sequence>
<gene>
    <name evidence="4" type="primary">HHO3</name>
    <name evidence="5" type="ordered locus">At1g25550</name>
    <name evidence="6" type="ORF">F2J7.21</name>
</gene>